<gene>
    <name evidence="1" type="primary">gcvT</name>
    <name type="ordered locus">BF1290</name>
</gene>
<name>GCST_BACFN</name>
<evidence type="ECO:0000255" key="1">
    <source>
        <dbReference type="HAMAP-Rule" id="MF_00259"/>
    </source>
</evidence>
<keyword id="KW-0032">Aminotransferase</keyword>
<keyword id="KW-0808">Transferase</keyword>
<comment type="function">
    <text evidence="1">The glycine cleavage system catalyzes the degradation of glycine.</text>
</comment>
<comment type="catalytic activity">
    <reaction evidence="1">
        <text>N(6)-[(R)-S(8)-aminomethyldihydrolipoyl]-L-lysyl-[protein] + (6S)-5,6,7,8-tetrahydrofolate = N(6)-[(R)-dihydrolipoyl]-L-lysyl-[protein] + (6R)-5,10-methylene-5,6,7,8-tetrahydrofolate + NH4(+)</text>
        <dbReference type="Rhea" id="RHEA:16945"/>
        <dbReference type="Rhea" id="RHEA-COMP:10475"/>
        <dbReference type="Rhea" id="RHEA-COMP:10492"/>
        <dbReference type="ChEBI" id="CHEBI:15636"/>
        <dbReference type="ChEBI" id="CHEBI:28938"/>
        <dbReference type="ChEBI" id="CHEBI:57453"/>
        <dbReference type="ChEBI" id="CHEBI:83100"/>
        <dbReference type="ChEBI" id="CHEBI:83143"/>
        <dbReference type="EC" id="2.1.2.10"/>
    </reaction>
</comment>
<comment type="subunit">
    <text evidence="1">The glycine cleavage system is composed of four proteins: P, T, L and H.</text>
</comment>
<comment type="similarity">
    <text evidence="1">Belongs to the GcvT family.</text>
</comment>
<reference key="1">
    <citation type="journal article" date="2005" name="Science">
        <title>Extensive DNA inversions in the B. fragilis genome control variable gene expression.</title>
        <authorList>
            <person name="Cerdeno-Tarraga A.-M."/>
            <person name="Patrick S."/>
            <person name="Crossman L.C."/>
            <person name="Blakely G."/>
            <person name="Abratt V."/>
            <person name="Lennard N."/>
            <person name="Poxton I."/>
            <person name="Duerden B."/>
            <person name="Harris B."/>
            <person name="Quail M.A."/>
            <person name="Barron A."/>
            <person name="Clark L."/>
            <person name="Corton C."/>
            <person name="Doggett J."/>
            <person name="Holden M.T.G."/>
            <person name="Larke N."/>
            <person name="Line A."/>
            <person name="Lord A."/>
            <person name="Norbertczak H."/>
            <person name="Ormond D."/>
            <person name="Price C."/>
            <person name="Rabbinowitsch E."/>
            <person name="Woodward J."/>
            <person name="Barrell B.G."/>
            <person name="Parkhill J."/>
        </authorList>
    </citation>
    <scope>NUCLEOTIDE SEQUENCE [LARGE SCALE GENOMIC DNA]</scope>
    <source>
        <strain>ATCC 25285 / DSM 2151 / CCUG 4856 / JCM 11019 / LMG 10263 / NCTC 9343 / Onslow / VPI 2553 / EN-2</strain>
    </source>
</reference>
<protein>
    <recommendedName>
        <fullName evidence="1">Aminomethyltransferase</fullName>
        <ecNumber evidence="1">2.1.2.10</ecNumber>
    </recommendedName>
    <alternativeName>
        <fullName evidence="1">Glycine cleavage system T protein</fullName>
    </alternativeName>
</protein>
<accession>Q5LFT6</accession>
<dbReference type="EC" id="2.1.2.10" evidence="1"/>
<dbReference type="EMBL" id="CR626927">
    <property type="protein sequence ID" value="CAH07007.1"/>
    <property type="molecule type" value="Genomic_DNA"/>
</dbReference>
<dbReference type="RefSeq" id="WP_005795559.1">
    <property type="nucleotide sequence ID" value="NZ_UFTH01000001.1"/>
</dbReference>
<dbReference type="SMR" id="Q5LFT6"/>
<dbReference type="PaxDb" id="272559-BF9343_1226"/>
<dbReference type="GeneID" id="60368774"/>
<dbReference type="KEGG" id="bfs:BF9343_1226"/>
<dbReference type="eggNOG" id="COG0404">
    <property type="taxonomic scope" value="Bacteria"/>
</dbReference>
<dbReference type="HOGENOM" id="CLU_007884_10_2_10"/>
<dbReference type="Proteomes" id="UP000006731">
    <property type="component" value="Chromosome"/>
</dbReference>
<dbReference type="GO" id="GO:0005829">
    <property type="term" value="C:cytosol"/>
    <property type="evidence" value="ECO:0007669"/>
    <property type="project" value="TreeGrafter"/>
</dbReference>
<dbReference type="GO" id="GO:0005960">
    <property type="term" value="C:glycine cleavage complex"/>
    <property type="evidence" value="ECO:0007669"/>
    <property type="project" value="InterPro"/>
</dbReference>
<dbReference type="GO" id="GO:0004047">
    <property type="term" value="F:aminomethyltransferase activity"/>
    <property type="evidence" value="ECO:0007669"/>
    <property type="project" value="UniProtKB-UniRule"/>
</dbReference>
<dbReference type="GO" id="GO:0008483">
    <property type="term" value="F:transaminase activity"/>
    <property type="evidence" value="ECO:0007669"/>
    <property type="project" value="UniProtKB-KW"/>
</dbReference>
<dbReference type="GO" id="GO:0019464">
    <property type="term" value="P:glycine decarboxylation via glycine cleavage system"/>
    <property type="evidence" value="ECO:0007669"/>
    <property type="project" value="UniProtKB-UniRule"/>
</dbReference>
<dbReference type="FunFam" id="2.40.30.110:FF:000003">
    <property type="entry name" value="Aminomethyltransferase"/>
    <property type="match status" value="1"/>
</dbReference>
<dbReference type="FunFam" id="3.30.70.1400:FF:000001">
    <property type="entry name" value="Aminomethyltransferase"/>
    <property type="match status" value="1"/>
</dbReference>
<dbReference type="FunFam" id="4.10.1250.10:FF:000001">
    <property type="entry name" value="Aminomethyltransferase"/>
    <property type="match status" value="1"/>
</dbReference>
<dbReference type="Gene3D" id="2.40.30.110">
    <property type="entry name" value="Aminomethyltransferase beta-barrel domains"/>
    <property type="match status" value="1"/>
</dbReference>
<dbReference type="Gene3D" id="3.30.70.1400">
    <property type="entry name" value="Aminomethyltransferase beta-barrel domains"/>
    <property type="match status" value="1"/>
</dbReference>
<dbReference type="Gene3D" id="4.10.1250.10">
    <property type="entry name" value="Aminomethyltransferase fragment"/>
    <property type="match status" value="1"/>
</dbReference>
<dbReference type="Gene3D" id="3.30.1360.120">
    <property type="entry name" value="Probable tRNA modification gtpase trme, domain 1"/>
    <property type="match status" value="1"/>
</dbReference>
<dbReference type="HAMAP" id="MF_00259">
    <property type="entry name" value="GcvT"/>
    <property type="match status" value="1"/>
</dbReference>
<dbReference type="InterPro" id="IPR006223">
    <property type="entry name" value="GCS_T"/>
</dbReference>
<dbReference type="InterPro" id="IPR022903">
    <property type="entry name" value="GCS_T_bac"/>
</dbReference>
<dbReference type="InterPro" id="IPR013977">
    <property type="entry name" value="GCST_C"/>
</dbReference>
<dbReference type="InterPro" id="IPR006222">
    <property type="entry name" value="GCV_T_N"/>
</dbReference>
<dbReference type="InterPro" id="IPR028896">
    <property type="entry name" value="GcvT/YgfZ/DmdA"/>
</dbReference>
<dbReference type="InterPro" id="IPR029043">
    <property type="entry name" value="GcvT/YgfZ_C"/>
</dbReference>
<dbReference type="InterPro" id="IPR027266">
    <property type="entry name" value="TrmE/GcvT_dom1"/>
</dbReference>
<dbReference type="NCBIfam" id="TIGR00528">
    <property type="entry name" value="gcvT"/>
    <property type="match status" value="1"/>
</dbReference>
<dbReference type="NCBIfam" id="NF001567">
    <property type="entry name" value="PRK00389.1"/>
    <property type="match status" value="1"/>
</dbReference>
<dbReference type="PANTHER" id="PTHR43757">
    <property type="entry name" value="AMINOMETHYLTRANSFERASE"/>
    <property type="match status" value="1"/>
</dbReference>
<dbReference type="PANTHER" id="PTHR43757:SF2">
    <property type="entry name" value="AMINOMETHYLTRANSFERASE, MITOCHONDRIAL"/>
    <property type="match status" value="1"/>
</dbReference>
<dbReference type="Pfam" id="PF01571">
    <property type="entry name" value="GCV_T"/>
    <property type="match status" value="1"/>
</dbReference>
<dbReference type="Pfam" id="PF08669">
    <property type="entry name" value="GCV_T_C"/>
    <property type="match status" value="1"/>
</dbReference>
<dbReference type="PIRSF" id="PIRSF006487">
    <property type="entry name" value="GcvT"/>
    <property type="match status" value="1"/>
</dbReference>
<dbReference type="SUPFAM" id="SSF101790">
    <property type="entry name" value="Aminomethyltransferase beta-barrel domain"/>
    <property type="match status" value="1"/>
</dbReference>
<dbReference type="SUPFAM" id="SSF103025">
    <property type="entry name" value="Folate-binding domain"/>
    <property type="match status" value="1"/>
</dbReference>
<sequence>MKTTPFTEKHIALGAKMHEFAGYNMPIEYSGIIDEHLTVCNGVGVFDVSHMGEFWVKGPHALDFLQKVTSNNVAALVPGKIQYTCFPNEDGGIVDDLLVYQYEPEKYLLVVNASNIEKDWNWCISHNTEGAELENSSDNMAQLAVQGPKAIQALQKLTDINLADIPYYTFKVGEFAGEKNVIISNTGYTGAGGFELYFYPDAAMKIWDAVFEAGAEFGIKPIGLGARDTLRLEMGFCLYGNDLDDTTSPIEAGLGWITKFVDGKNFTNRSMLEKQKAEGTVRKLVGFEMIDRGIPRHGYELTTAEGDKIGVVTSGTMSPIRKIGIGMGYVKPEYSKIGTEICIDMRGRKLKAVVVKPPFRK</sequence>
<proteinExistence type="inferred from homology"/>
<organism>
    <name type="scientific">Bacteroides fragilis (strain ATCC 25285 / DSM 2151 / CCUG 4856 / JCM 11019 / LMG 10263 / NCTC 9343 / Onslow / VPI 2553 / EN-2)</name>
    <dbReference type="NCBI Taxonomy" id="272559"/>
    <lineage>
        <taxon>Bacteria</taxon>
        <taxon>Pseudomonadati</taxon>
        <taxon>Bacteroidota</taxon>
        <taxon>Bacteroidia</taxon>
        <taxon>Bacteroidales</taxon>
        <taxon>Bacteroidaceae</taxon>
        <taxon>Bacteroides</taxon>
    </lineage>
</organism>
<feature type="chain" id="PRO_1000047645" description="Aminomethyltransferase">
    <location>
        <begin position="1"/>
        <end position="361"/>
    </location>
</feature>